<feature type="chain" id="PRO_0000295202" description="Nucleoprotein">
    <location>
        <begin position="1"/>
        <end position="450"/>
    </location>
</feature>
<feature type="modified residue" description="Phosphoserine; by host CK2" evidence="1">
    <location>
        <position position="389"/>
    </location>
</feature>
<reference key="1">
    <citation type="journal article" date="2003" name="Virus Res.">
        <title>Bat lyssaviruses (Aravan and Khujand) from Central Asia: phylogenetic relationships according to N, P and G gene sequences.</title>
        <authorList>
            <person name="Kuzmin I.V."/>
            <person name="Orciari L.A."/>
            <person name="Arai Y.T."/>
            <person name="Smith J.S."/>
            <person name="Hanlon C.A."/>
            <person name="Kameoka Y."/>
            <person name="Rupprecht C.E."/>
        </authorList>
    </citation>
    <scope>NUCLEOTIDE SEQUENCE [GENOMIC RNA]</scope>
</reference>
<reference key="2">
    <citation type="journal article" date="2008" name="Virus Res.">
        <title>Complete genomes of Aravan, Khujand, Irkut and West Caucasian bat viruses, with special attention to the polymerase gene and non-coding regions.</title>
        <authorList>
            <person name="Kuzmin I.V."/>
            <person name="Wu X."/>
            <person name="Tordo N."/>
            <person name="Rupprecht C.E."/>
        </authorList>
    </citation>
    <scope>NUCLEOTIDE SEQUENCE [GENOMIC RNA]</scope>
</reference>
<protein>
    <recommendedName>
        <fullName>Nucleoprotein</fullName>
        <shortName>NP</shortName>
    </recommendedName>
    <alternativeName>
        <fullName>Nucleocapsid protein</fullName>
        <shortName>Protein N</shortName>
    </alternativeName>
</protein>
<accession>Q6X1D8</accession>
<keyword id="KW-0167">Capsid protein</keyword>
<keyword id="KW-1139">Helical capsid protein</keyword>
<keyword id="KW-1035">Host cytoplasm</keyword>
<keyword id="KW-0597">Phosphoprotein</keyword>
<keyword id="KW-0687">Ribonucleoprotein</keyword>
<keyword id="KW-0694">RNA-binding</keyword>
<keyword id="KW-0766">Superantigen</keyword>
<keyword id="KW-0543">Viral nucleoprotein</keyword>
<keyword id="KW-0946">Virion</keyword>
<organism>
    <name type="scientific">Aravan virus</name>
    <name type="common">ARAV</name>
    <dbReference type="NCBI Taxonomy" id="211977"/>
    <lineage>
        <taxon>Viruses</taxon>
        <taxon>Riboviria</taxon>
        <taxon>Orthornavirae</taxon>
        <taxon>Negarnaviricota</taxon>
        <taxon>Haploviricotina</taxon>
        <taxon>Monjiviricetes</taxon>
        <taxon>Mononegavirales</taxon>
        <taxon>Rhabdoviridae</taxon>
        <taxon>Alpharhabdovirinae</taxon>
        <taxon>Lyssavirus</taxon>
    </lineage>
</organism>
<dbReference type="EMBL" id="EF614259">
    <property type="protein sequence ID" value="AAP86772.1"/>
    <property type="molecule type" value="Genomic_RNA"/>
</dbReference>
<dbReference type="RefSeq" id="YP_007641392.1">
    <property type="nucleotide sequence ID" value="NC_020808.1"/>
</dbReference>
<dbReference type="SMR" id="Q6X1D8"/>
<dbReference type="GeneID" id="14857930"/>
<dbReference type="KEGG" id="vg:14857930"/>
<dbReference type="OrthoDB" id="22890at10239"/>
<dbReference type="Proteomes" id="UP000007445">
    <property type="component" value="Genome"/>
</dbReference>
<dbReference type="GO" id="GO:0019029">
    <property type="term" value="C:helical viral capsid"/>
    <property type="evidence" value="ECO:0007669"/>
    <property type="project" value="UniProtKB-KW"/>
</dbReference>
<dbReference type="GO" id="GO:0030430">
    <property type="term" value="C:host cell cytoplasm"/>
    <property type="evidence" value="ECO:0007669"/>
    <property type="project" value="UniProtKB-SubCell"/>
</dbReference>
<dbReference type="GO" id="GO:1990904">
    <property type="term" value="C:ribonucleoprotein complex"/>
    <property type="evidence" value="ECO:0007669"/>
    <property type="project" value="UniProtKB-KW"/>
</dbReference>
<dbReference type="GO" id="GO:0019013">
    <property type="term" value="C:viral nucleocapsid"/>
    <property type="evidence" value="ECO:0007669"/>
    <property type="project" value="UniProtKB-KW"/>
</dbReference>
<dbReference type="GO" id="GO:0003723">
    <property type="term" value="F:RNA binding"/>
    <property type="evidence" value="ECO:0007669"/>
    <property type="project" value="UniProtKB-KW"/>
</dbReference>
<dbReference type="Gene3D" id="1.10.3610.10">
    <property type="entry name" value="Nucleoprotein"/>
    <property type="match status" value="1"/>
</dbReference>
<dbReference type="Gene3D" id="1.10.3570.10">
    <property type="entry name" value="Rhabdovirus nucleocapsid protein like domain"/>
    <property type="match status" value="1"/>
</dbReference>
<dbReference type="InterPro" id="IPR000448">
    <property type="entry name" value="Rhabdo_ncapsid"/>
</dbReference>
<dbReference type="InterPro" id="IPR023331">
    <property type="entry name" value="Rhabdovirus_ncapsid_C"/>
</dbReference>
<dbReference type="InterPro" id="IPR023330">
    <property type="entry name" value="Rhabdovirus_ncapsid_N"/>
</dbReference>
<dbReference type="InterPro" id="IPR035961">
    <property type="entry name" value="Rhabdovirus_nucleoprotein-like"/>
</dbReference>
<dbReference type="Pfam" id="PF00945">
    <property type="entry name" value="Rhabdo_ncap"/>
    <property type="match status" value="1"/>
</dbReference>
<dbReference type="SUPFAM" id="SSF140809">
    <property type="entry name" value="Rhabdovirus nucleoprotein-like"/>
    <property type="match status" value="1"/>
</dbReference>
<comment type="function">
    <text evidence="1">Encapsidates the genome in a ratio of one protein N per nine ribonucleotides, protecting it from nucleases. If expressed without protein P it binds non-specifically RNA and therefore can bind it's own mRNA. Interaction with protein P abolishes any non-specific RNA binding, and prevents phosphorylation. The soluble N-P complex encapsidates specifically the genomic RNA, with protein N protecting the genome like a pearl necklace. The encapsidated genomic RNA is termed the nucleocapsid (NC) and serves as template for viral transcription and replication. Protein N binds protein P in the NC through a different interaction, and can be phosphorylated. Subsequent viral replication is dependent on intracellular concentration of newly synthesized protein N. During replication, encapsidation by protein N is coupled to RNA synthesis and all replicative products are resistant to nucleases (By similarity).</text>
</comment>
<comment type="subunit">
    <text evidence="1">Homomultimerizes to form the nucleocapsid. Binds to viral genomic RNA. In nucleocapsid, binds protein P and thereby positions the polymerase on the template. Protein P acts as a chaperone on free protein N to prevent it from aggregation before encapsidating genomic RNA (By similarity).</text>
</comment>
<comment type="subcellular location">
    <subcellularLocation>
        <location>Virion</location>
    </subcellularLocation>
    <subcellularLocation>
        <location evidence="1">Host cytoplasm</location>
    </subcellularLocation>
</comment>
<comment type="PTM">
    <text evidence="1">Phosphorylated by host CK2. Unphosphorylated protein N seems to have a better affinity for leader viral promoter encapsidation. Phosphorylation of protein N in ribonucleocapsid may stabilize the interaction with protein P, thereby playing an important role in viral transcription/replication (By similarity).</text>
</comment>
<comment type="miscellaneous">
    <text evidence="1">Displays a superantigen activity in human and mouse, activating mostly V-beta-8 subtypes of T-cell receptor.</text>
</comment>
<comment type="similarity">
    <text evidence="2">Belongs to the lyssavirus nucleocapsid protein family.</text>
</comment>
<evidence type="ECO:0000250" key="1"/>
<evidence type="ECO:0000305" key="2"/>
<proteinExistence type="inferred from homology"/>
<organismHost>
    <name type="scientific">Myotis blythii</name>
    <name type="common">Lesser mouse-eared bat</name>
    <dbReference type="NCBI Taxonomy" id="109482"/>
</organismHost>
<name>NCAP_ARAV</name>
<sequence>MDSDKIVFKVHNQLVSVKPEVITDQYEYKYPAIGNQKKPSITLGKAPDLNKAYKSILSGMNAAKLDPDDVCSYLAAAMELFEGVCPDDWASYGILIAKKGDKITPTTLVDIIRTDVEGNWAQTGGQDLTRDPTTAEHASLVGLLLCLYRLSKIVGQNTGNYKTNVADRMEQIFETAPFVKVVEHHTLMTTHKMCANWSTIPNFRFLAGTYDMFFSRIEHLYSAIRVGTVVTAYEDCSGLVSFTGFIKQINLTAREAILYFFHKNFEEEIKRMFEPGQETAVPHSYFIHFRSLGLSGKSPYSSNAVGHVFNLIHFVGCYMGQIRSLNATVISSCAPHEMSVLGGYLGEEFFGKGTFERRFFRDEKELQDYELAEATKTDLALADDGTVNSDDEDFFSGETRSPEAVYTRIMMNGGRLKKSHIRRYVSVSSNHQARPNSFAEFLNKTYSGDQR</sequence>
<gene>
    <name type="primary">N</name>
</gene>